<organism>
    <name type="scientific">Mycobacterium bovis (strain ATCC BAA-935 / AF2122/97)</name>
    <dbReference type="NCBI Taxonomy" id="233413"/>
    <lineage>
        <taxon>Bacteria</taxon>
        <taxon>Bacillati</taxon>
        <taxon>Actinomycetota</taxon>
        <taxon>Actinomycetes</taxon>
        <taxon>Mycobacteriales</taxon>
        <taxon>Mycobacteriaceae</taxon>
        <taxon>Mycobacterium</taxon>
        <taxon>Mycobacterium tuberculosis complex</taxon>
    </lineage>
</organism>
<proteinExistence type="inferred from homology"/>
<reference key="1">
    <citation type="journal article" date="2003" name="Proc. Natl. Acad. Sci. U.S.A.">
        <title>The complete genome sequence of Mycobacterium bovis.</title>
        <authorList>
            <person name="Garnier T."/>
            <person name="Eiglmeier K."/>
            <person name="Camus J.-C."/>
            <person name="Medina N."/>
            <person name="Mansoor H."/>
            <person name="Pryor M."/>
            <person name="Duthoy S."/>
            <person name="Grondin S."/>
            <person name="Lacroix C."/>
            <person name="Monsempe C."/>
            <person name="Simon S."/>
            <person name="Harris B."/>
            <person name="Atkin R."/>
            <person name="Doggett J."/>
            <person name="Mayes R."/>
            <person name="Keating L."/>
            <person name="Wheeler P.R."/>
            <person name="Parkhill J."/>
            <person name="Barrell B.G."/>
            <person name="Cole S.T."/>
            <person name="Gordon S.V."/>
            <person name="Hewinson R.G."/>
        </authorList>
    </citation>
    <scope>NUCLEOTIDE SEQUENCE [LARGE SCALE GENOMIC DNA]</scope>
    <source>
        <strain>ATCC BAA-935 / AF2122/97</strain>
    </source>
</reference>
<reference key="2">
    <citation type="journal article" date="2017" name="Genome Announc.">
        <title>Updated reference genome sequence and annotation of Mycobacterium bovis AF2122/97.</title>
        <authorList>
            <person name="Malone K.M."/>
            <person name="Farrell D."/>
            <person name="Stuber T.P."/>
            <person name="Schubert O.T."/>
            <person name="Aebersold R."/>
            <person name="Robbe-Austerman S."/>
            <person name="Gordon S.V."/>
        </authorList>
    </citation>
    <scope>NUCLEOTIDE SEQUENCE [LARGE SCALE GENOMIC DNA]</scope>
    <scope>GENOME REANNOTATION</scope>
    <source>
        <strain>ATCC BAA-935 / AF2122/97</strain>
    </source>
</reference>
<sequence length="429" mass="47350">MDNDGTIVDVTTHQLPWHTASHQRQRAFAQSAKLQDVLYEIRGPVHQHAARLEAEGHRILKLNIGNPAPFGFEAPDVIMRDIIQALPYAQGYSDSQGILSARRAVVTRYELVPGFPRFDVDDVYLGNGVSELITMTLQALLDNGDQVLIPSPDYPLWTASTSLAGGTPVHYLCDETQGWQPDIADLESKITERTKALVVINPNNPTGAVYSCEILTQMVDLARKHQLLLLADEIYDKILYDDAKHISLASIAPDMLCLTFNGLSKAYRVAGYRAGWLAITGPKEHASSFIEGIGLLANMRLCPNVPAQHAIQVALGGHQSIEDLVLPGGRLLEQRDIAWTKLNEIPGVSCVKPAGALYAFPRLDPEVYDIDDDEQLVLDLLLSEKILVTQGTGFNWPAPDHLRLVTLPWSRDLAAAIERLGNFLVSYRQ</sequence>
<feature type="chain" id="PRO_0000123844" description="Alanine aminotransferase">
    <location>
        <begin position="1"/>
        <end position="429"/>
    </location>
</feature>
<feature type="binding site" evidence="2">
    <location>
        <position position="65"/>
    </location>
    <ligand>
        <name>L-alanine</name>
        <dbReference type="ChEBI" id="CHEBI:57972"/>
    </ligand>
</feature>
<feature type="binding site" evidence="2">
    <location>
        <position position="204"/>
    </location>
    <ligand>
        <name>L-alanine</name>
        <dbReference type="ChEBI" id="CHEBI:57972"/>
    </ligand>
</feature>
<feature type="binding site" evidence="2">
    <location>
        <position position="403"/>
    </location>
    <ligand>
        <name>L-alanine</name>
        <dbReference type="ChEBI" id="CHEBI:57972"/>
    </ligand>
</feature>
<feature type="modified residue" description="N6-(pyridoxal phosphate)lysine" evidence="4">
    <location>
        <position position="265"/>
    </location>
</feature>
<keyword id="KW-0032">Aminotransferase</keyword>
<keyword id="KW-0963">Cytoplasm</keyword>
<keyword id="KW-0663">Pyridoxal phosphate</keyword>
<keyword id="KW-1185">Reference proteome</keyword>
<keyword id="KW-0808">Transferase</keyword>
<protein>
    <recommendedName>
        <fullName evidence="3">Alanine aminotransferase</fullName>
        <ecNumber evidence="3">2.6.1.2</ecNumber>
    </recommendedName>
    <alternativeName>
        <fullName evidence="3">Alanine transaminase</fullName>
    </alternativeName>
    <alternativeName>
        <fullName>Transaminase A</fullName>
    </alternativeName>
</protein>
<name>ALAA_MYCBO</name>
<accession>P63499</accession>
<accession>A0A1R3XV17</accession>
<accession>O33267</accession>
<accession>X2BEM9</accession>
<dbReference type="EC" id="2.6.1.2" evidence="3"/>
<dbReference type="EMBL" id="LT708304">
    <property type="protein sequence ID" value="SIT98893.1"/>
    <property type="molecule type" value="Genomic_DNA"/>
</dbReference>
<dbReference type="RefSeq" id="NP_854008.1">
    <property type="nucleotide sequence ID" value="NC_002945.3"/>
</dbReference>
<dbReference type="RefSeq" id="WP_003401733.1">
    <property type="nucleotide sequence ID" value="NC_002945.4"/>
</dbReference>
<dbReference type="SMR" id="P63499"/>
<dbReference type="PATRIC" id="fig|233413.5.peg.374"/>
<dbReference type="Proteomes" id="UP000001419">
    <property type="component" value="Chromosome"/>
</dbReference>
<dbReference type="GO" id="GO:0005737">
    <property type="term" value="C:cytoplasm"/>
    <property type="evidence" value="ECO:0007669"/>
    <property type="project" value="UniProtKB-SubCell"/>
</dbReference>
<dbReference type="GO" id="GO:0004021">
    <property type="term" value="F:L-alanine:2-oxoglutarate aminotransferase activity"/>
    <property type="evidence" value="ECO:0007669"/>
    <property type="project" value="UniProtKB-EC"/>
</dbReference>
<dbReference type="GO" id="GO:0030170">
    <property type="term" value="F:pyridoxal phosphate binding"/>
    <property type="evidence" value="ECO:0007669"/>
    <property type="project" value="InterPro"/>
</dbReference>
<dbReference type="GO" id="GO:0009058">
    <property type="term" value="P:biosynthetic process"/>
    <property type="evidence" value="ECO:0007669"/>
    <property type="project" value="InterPro"/>
</dbReference>
<dbReference type="CDD" id="cd00609">
    <property type="entry name" value="AAT_like"/>
    <property type="match status" value="1"/>
</dbReference>
<dbReference type="FunFam" id="3.40.640.10:FF:000019">
    <property type="entry name" value="Pyridoxal phosphate-dependent aminotransferase"/>
    <property type="match status" value="1"/>
</dbReference>
<dbReference type="Gene3D" id="3.90.1150.10">
    <property type="entry name" value="Aspartate Aminotransferase, domain 1"/>
    <property type="match status" value="1"/>
</dbReference>
<dbReference type="Gene3D" id="3.40.640.10">
    <property type="entry name" value="Type I PLP-dependent aspartate aminotransferase-like (Major domain)"/>
    <property type="match status" value="1"/>
</dbReference>
<dbReference type="InterPro" id="IPR051926">
    <property type="entry name" value="Ala_Aminotransferase"/>
</dbReference>
<dbReference type="InterPro" id="IPR004839">
    <property type="entry name" value="Aminotransferase_I/II_large"/>
</dbReference>
<dbReference type="InterPro" id="IPR015424">
    <property type="entry name" value="PyrdxlP-dep_Trfase"/>
</dbReference>
<dbReference type="InterPro" id="IPR015421">
    <property type="entry name" value="PyrdxlP-dep_Trfase_major"/>
</dbReference>
<dbReference type="InterPro" id="IPR015422">
    <property type="entry name" value="PyrdxlP-dep_Trfase_small"/>
</dbReference>
<dbReference type="PANTHER" id="PTHR43488">
    <property type="entry name" value="GLUTAMATE-PYRUVATE AMINOTRANSFERASE ALAA"/>
    <property type="match status" value="1"/>
</dbReference>
<dbReference type="PANTHER" id="PTHR43488:SF2">
    <property type="entry name" value="GLUTAMATE-PYRUVATE AMINOTRANSFERASE ALAA"/>
    <property type="match status" value="1"/>
</dbReference>
<dbReference type="Pfam" id="PF00155">
    <property type="entry name" value="Aminotran_1_2"/>
    <property type="match status" value="1"/>
</dbReference>
<dbReference type="SUPFAM" id="SSF53383">
    <property type="entry name" value="PLP-dependent transferases"/>
    <property type="match status" value="1"/>
</dbReference>
<gene>
    <name type="primary">aspC</name>
    <name type="ordered locus">BQ2027_MB0344C</name>
</gene>
<evidence type="ECO:0000250" key="1"/>
<evidence type="ECO:0000250" key="2">
    <source>
        <dbReference type="UniProtKB" id="P0A959"/>
    </source>
</evidence>
<evidence type="ECO:0000250" key="3">
    <source>
        <dbReference type="UniProtKB" id="P9WQ91"/>
    </source>
</evidence>
<evidence type="ECO:0000250" key="4">
    <source>
        <dbReference type="UniProtKB" id="Q56232"/>
    </source>
</evidence>
<evidence type="ECO:0000305" key="5"/>
<comment type="catalytic activity">
    <reaction evidence="3">
        <text>L-alanine + 2-oxoglutarate = pyruvate + L-glutamate</text>
        <dbReference type="Rhea" id="RHEA:19453"/>
        <dbReference type="ChEBI" id="CHEBI:15361"/>
        <dbReference type="ChEBI" id="CHEBI:16810"/>
        <dbReference type="ChEBI" id="CHEBI:29985"/>
        <dbReference type="ChEBI" id="CHEBI:57972"/>
        <dbReference type="EC" id="2.6.1.2"/>
    </reaction>
</comment>
<comment type="cofactor">
    <cofactor evidence="4">
        <name>pyridoxal 5'-phosphate</name>
        <dbReference type="ChEBI" id="CHEBI:597326"/>
    </cofactor>
</comment>
<comment type="subunit">
    <text evidence="1">Homodimer.</text>
</comment>
<comment type="subcellular location">
    <subcellularLocation>
        <location evidence="1">Cytoplasm</location>
    </subcellularLocation>
</comment>
<comment type="similarity">
    <text evidence="5">Belongs to the class-I pyridoxal-phosphate-dependent aminotransferase family.</text>
</comment>